<organism>
    <name type="scientific">Bos taurus</name>
    <name type="common">Bovine</name>
    <dbReference type="NCBI Taxonomy" id="9913"/>
    <lineage>
        <taxon>Eukaryota</taxon>
        <taxon>Metazoa</taxon>
        <taxon>Chordata</taxon>
        <taxon>Craniata</taxon>
        <taxon>Vertebrata</taxon>
        <taxon>Euteleostomi</taxon>
        <taxon>Mammalia</taxon>
        <taxon>Eutheria</taxon>
        <taxon>Laurasiatheria</taxon>
        <taxon>Artiodactyla</taxon>
        <taxon>Ruminantia</taxon>
        <taxon>Pecora</taxon>
        <taxon>Bovidae</taxon>
        <taxon>Bovinae</taxon>
        <taxon>Bos</taxon>
    </lineage>
</organism>
<reference key="1">
    <citation type="submission" date="2007-04" db="EMBL/GenBank/DDBJ databases">
        <authorList>
            <consortium name="NIH - Mammalian Gene Collection (MGC) project"/>
        </authorList>
    </citation>
    <scope>NUCLEOTIDE SEQUENCE [LARGE SCALE MRNA]</scope>
    <source>
        <strain>Hereford</strain>
        <tissue>Fetal muscle</tissue>
    </source>
</reference>
<evidence type="ECO:0000250" key="1"/>
<evidence type="ECO:0000256" key="2">
    <source>
        <dbReference type="SAM" id="MobiDB-lite"/>
    </source>
</evidence>
<protein>
    <recommendedName>
        <fullName>PGC-1 and ERR-induced regulator in muscle protein 1</fullName>
    </recommendedName>
    <alternativeName>
        <fullName>PPARGC1 and ESRR-induced regulator in muscle 1</fullName>
    </alternativeName>
    <alternativeName>
        <fullName>Peroxisome proliferator-activated receptor gamma coactivator 1 and estrogen-related receptor-induced regulator in muscle 1</fullName>
    </alternativeName>
</protein>
<dbReference type="EMBL" id="BC140606">
    <property type="protein sequence ID" value="AAI40607.1"/>
    <property type="molecule type" value="mRNA"/>
</dbReference>
<dbReference type="RefSeq" id="NP_001091517.1">
    <property type="nucleotide sequence ID" value="NM_001098048.1"/>
</dbReference>
<dbReference type="RefSeq" id="XP_005217147.1">
    <property type="nucleotide sequence ID" value="XM_005217090.5"/>
</dbReference>
<dbReference type="RefSeq" id="XP_015330635.1">
    <property type="nucleotide sequence ID" value="XM_015475149.3"/>
</dbReference>
<dbReference type="FunCoup" id="A5D7L8">
    <property type="interactions" value="258"/>
</dbReference>
<dbReference type="STRING" id="9913.ENSBTAP00000008511"/>
<dbReference type="PaxDb" id="9913-ENSBTAP00000008511"/>
<dbReference type="Ensembl" id="ENSBTAT00000008511.6">
    <property type="protein sequence ID" value="ENSBTAP00000008511.5"/>
    <property type="gene ID" value="ENSBTAG00000014540.7"/>
</dbReference>
<dbReference type="GeneID" id="520080"/>
<dbReference type="KEGG" id="bta:520080"/>
<dbReference type="CTD" id="84808"/>
<dbReference type="VEuPathDB" id="HostDB:ENSBTAG00000014540"/>
<dbReference type="VGNC" id="VGNC:32749">
    <property type="gene designation" value="PERM1"/>
</dbReference>
<dbReference type="eggNOG" id="ENOG502RYI7">
    <property type="taxonomic scope" value="Eukaryota"/>
</dbReference>
<dbReference type="GeneTree" id="ENSGT00390000017652"/>
<dbReference type="HOGENOM" id="CLU_015049_0_0_1"/>
<dbReference type="InParanoid" id="A5D7L8"/>
<dbReference type="OMA" id="EVQWPDT"/>
<dbReference type="OrthoDB" id="8943218at2759"/>
<dbReference type="TreeFam" id="TF338365"/>
<dbReference type="Proteomes" id="UP000009136">
    <property type="component" value="Chromosome 16"/>
</dbReference>
<dbReference type="Bgee" id="ENSBTAG00000014540">
    <property type="expression patterns" value="Expressed in choroid plexus and 85 other cell types or tissues"/>
</dbReference>
<dbReference type="GO" id="GO:0005737">
    <property type="term" value="C:cytoplasm"/>
    <property type="evidence" value="ECO:0000250"/>
    <property type="project" value="UniProtKB"/>
</dbReference>
<dbReference type="GO" id="GO:0005634">
    <property type="term" value="C:nucleus"/>
    <property type="evidence" value="ECO:0000250"/>
    <property type="project" value="UniProtKB"/>
</dbReference>
<dbReference type="GO" id="GO:0006355">
    <property type="term" value="P:regulation of DNA-templated transcription"/>
    <property type="evidence" value="ECO:0000250"/>
    <property type="project" value="UniProtKB"/>
</dbReference>
<dbReference type="GO" id="GO:0014850">
    <property type="term" value="P:response to muscle activity"/>
    <property type="evidence" value="ECO:0000250"/>
    <property type="project" value="UniProtKB"/>
</dbReference>
<dbReference type="InterPro" id="IPR043442">
    <property type="entry name" value="Perm1"/>
</dbReference>
<dbReference type="PANTHER" id="PTHR47282">
    <property type="entry name" value="PGC-1 AND ERR-INDUCED REGULATOR IN MUSCLE PROTEIN 1"/>
    <property type="match status" value="1"/>
</dbReference>
<dbReference type="PANTHER" id="PTHR47282:SF1">
    <property type="entry name" value="PGC-1 AND ERR-INDUCED REGULATOR IN MUSCLE PROTEIN 1"/>
    <property type="match status" value="1"/>
</dbReference>
<comment type="function">
    <text evidence="1">Regulates the expression of selective PPARGC1A/B and ESRRA/B/G target genes with roles in glucose and lipid metabolism, energy transfer, contractile function, muscle mitochondrial biogenesis and oxidative capacity. Required for the efficient induction of MT-CO2, MT-CO3, COX4I1, TFB1M, TFB2M, POLRMT and SIRT3 by PPARGC1A. Positively regulates the PPARGC1A/ESRRG-induced expression of CKMT2, TNNI3 and SLC2A4 and negatively regulates the PPARGC1A/ESRRG-induced expression of PDK4 (By similarity).</text>
</comment>
<comment type="subcellular location">
    <subcellularLocation>
        <location evidence="1">Cytoplasm</location>
    </subcellularLocation>
    <subcellularLocation>
        <location evidence="1">Nucleus</location>
    </subcellularLocation>
    <text evidence="1">Shows a nuclear localization in the presence of PPARGC1A.</text>
</comment>
<gene>
    <name type="primary">PERM1</name>
</gene>
<sequence>MENFQYSVQLSDQDWAEFSAAAEECGLLQAGLASGDEPLSSDTDQRDSRGSSPPGPSPFLEGQLTPGGSSWPSFEEEDKAATRQLVSRSWHEPMLAPEAGQQTPSTSAQSEARLSLSPGATPLVQGSSLPGPVSSRDEMQRLLRGPAPRGPAPTPTGEPAGSPESPVHSAAPQRSPGSPGAPPRSPGRKKRRTAGTKAGGRSGGPGPAPTQLDSPLLTEAKPEDSFGPAGSRGKGLPAGAAKQTAGTGPESAGAPEQVAGQGPGVDLSTSVSTTEQGTDRLGMSPRADPCAASTSDPGAPLDVTIKSDVALSTPASEPQPDKPQSTPAFKPQPDEPQSTPAFKPQPDESQSTSAFNAQPNEPQSTPTFSPQPDEPQSTPAFKPQPDEPQSTSAFNAQPNEPQSTLAFSPQPDEPQSTPAFKPQPDEPQSTPAFNVQPNEPQSTPAFSPQPNEPQSTPAFKPQPDEPQSTPAFNTQPNEPQSTPTFKPRLDVDQLMPGPVVQPEVDSSMPASKAVPCTALPHLVLEAGSDVGVSTPPAPTPQAGPDMVEAEVVPVAKLGLSPVRSLEGHQQNPRGEPSTDAPGHHTGEPPLGPIQAPKKKKVRFSMAMPSSEEPGSGEVSGPLSPATAPRMASGGHRGSGAWDSVAVGPRSPQPRILKHLPPPAPSASMGPGRRSCFAVTLPEAYDFFFCDTIEEEDEEAEGAAEAAQAPAEVQWPDVCEFFFQESQIQRSRHQEGRSQAPLLKAGSVPAPPPGDPMPISIPEAYEHFLEEDRSGGTLGPAALLQMQATEPSRSVLWGVGTGAPPESSPATVEQLTLAIREAVAPRGPLTSFTFSQKDMCMVFVAFATWAVRTSDLHAPDAWKTVLLANIGTISAIRYFRRQVERGRHSRSRSPSPSSSPSP</sequence>
<feature type="chain" id="PRO_0000299539" description="PGC-1 and ERR-induced regulator in muscle protein 1">
    <location>
        <begin position="1"/>
        <end position="901"/>
    </location>
</feature>
<feature type="region of interest" description="Disordered" evidence="2">
    <location>
        <begin position="29"/>
        <end position="511"/>
    </location>
</feature>
<feature type="region of interest" description="Disordered" evidence="2">
    <location>
        <begin position="564"/>
        <end position="671"/>
    </location>
</feature>
<feature type="region of interest" description="Disordered" evidence="2">
    <location>
        <begin position="731"/>
        <end position="752"/>
    </location>
</feature>
<feature type="compositionally biased region" description="Polar residues" evidence="2">
    <location>
        <begin position="100"/>
        <end position="112"/>
    </location>
</feature>
<feature type="compositionally biased region" description="Low complexity" evidence="2">
    <location>
        <begin position="157"/>
        <end position="178"/>
    </location>
</feature>
<feature type="compositionally biased region" description="Polar residues" evidence="2">
    <location>
        <begin position="267"/>
        <end position="276"/>
    </location>
</feature>
<feature type="compositionally biased region" description="Polar residues" evidence="2">
    <location>
        <begin position="347"/>
        <end position="379"/>
    </location>
</feature>
<feature type="compositionally biased region" description="Polar residues" evidence="2">
    <location>
        <begin position="387"/>
        <end position="418"/>
    </location>
</feature>
<feature type="compositionally biased region" description="Polar residues" evidence="2">
    <location>
        <begin position="426"/>
        <end position="457"/>
    </location>
</feature>
<feature type="compositionally biased region" description="Polar residues" evidence="2">
    <location>
        <begin position="465"/>
        <end position="484"/>
    </location>
</feature>
<feature type="compositionally biased region" description="Low complexity" evidence="2">
    <location>
        <begin position="608"/>
        <end position="624"/>
    </location>
</feature>
<accession>A5D7L8</accession>
<name>PERM1_BOVIN</name>
<keyword id="KW-0963">Cytoplasm</keyword>
<keyword id="KW-0539">Nucleus</keyword>
<keyword id="KW-1185">Reference proteome</keyword>
<keyword id="KW-0804">Transcription</keyword>
<keyword id="KW-0805">Transcription regulation</keyword>
<proteinExistence type="evidence at transcript level"/>